<organism>
    <name type="scientific">Xenopus laevis</name>
    <name type="common">African clawed frog</name>
    <dbReference type="NCBI Taxonomy" id="8355"/>
    <lineage>
        <taxon>Eukaryota</taxon>
        <taxon>Metazoa</taxon>
        <taxon>Chordata</taxon>
        <taxon>Craniata</taxon>
        <taxon>Vertebrata</taxon>
        <taxon>Euteleostomi</taxon>
        <taxon>Amphibia</taxon>
        <taxon>Batrachia</taxon>
        <taxon>Anura</taxon>
        <taxon>Pipoidea</taxon>
        <taxon>Pipidae</taxon>
        <taxon>Xenopodinae</taxon>
        <taxon>Xenopus</taxon>
        <taxon>Xenopus</taxon>
    </lineage>
</organism>
<name>LEVI_XENLA</name>
<reference key="1">
    <citation type="journal article" date="1988" name="J. Biol. Chem.">
        <title>Levitide, a neurohormone-like peptide from the skin of Xenopus laevis. Peptide and peptide precursor cDNA sequences.</title>
        <authorList>
            <person name="Poulter L."/>
            <person name="Terry A.S."/>
            <person name="Williams D.H."/>
            <person name="Giovannini M.G."/>
            <person name="Moore C.H."/>
            <person name="Gibson B.W."/>
        </authorList>
    </citation>
    <scope>NUCLEOTIDE SEQUENCE [MRNA]</scope>
    <scope>PYROGLUTAMATE FORMATION AT GLN-74</scope>
    <scope>PROTEIN SEQUENCE OF 74-87</scope>
    <scope>AMIDATION AT GLN-87</scope>
    <source>
        <tissue>Skin</tissue>
        <tissue>Skin secretion</tissue>
    </source>
</reference>
<proteinExistence type="evidence at protein level"/>
<feature type="signal peptide" evidence="1">
    <location>
        <begin position="1"/>
        <end position="20"/>
    </location>
</feature>
<feature type="chain" id="PRO_0000010674" description="Prolevitide">
    <location>
        <begin position="21"/>
        <end position="88"/>
    </location>
</feature>
<feature type="peptide" id="PRO_0000010675" description="Amphipathic peptide">
    <location>
        <begin position="39"/>
        <end position="63"/>
    </location>
</feature>
<feature type="peptide" id="PRO_0000010676" description="Levitide">
    <location>
        <begin position="74"/>
        <end position="87"/>
    </location>
</feature>
<feature type="modified residue" description="Pyrrolidone carboxylic acid" evidence="2">
    <location>
        <position position="74"/>
    </location>
</feature>
<feature type="modified residue" description="Glutamine amide" evidence="2">
    <location>
        <position position="87"/>
    </location>
</feature>
<sequence length="88" mass="9590">MYKGIFLCVLFAVICANSLAKPSSDADEDNDEVERYVRGWASKIGQTLGKIAKVGLQGLMQPKREAMLRSAEAQGMIGTLTSKRIKQG</sequence>
<comment type="subcellular location">
    <subcellularLocation>
        <location>Secreted</location>
    </subcellularLocation>
</comment>
<comment type="tissue specificity">
    <text>Expressed by the skin glands.</text>
</comment>
<comment type="similarity">
    <text evidence="3">Belongs to the gastrin/cholecystokinin family.</text>
</comment>
<keyword id="KW-0027">Amidation</keyword>
<keyword id="KW-0878">Amphibian defense peptide</keyword>
<keyword id="KW-0903">Direct protein sequencing</keyword>
<keyword id="KW-0372">Hormone</keyword>
<keyword id="KW-0527">Neuropeptide</keyword>
<keyword id="KW-0873">Pyrrolidone carboxylic acid</keyword>
<keyword id="KW-1185">Reference proteome</keyword>
<keyword id="KW-0964">Secreted</keyword>
<keyword id="KW-0732">Signal</keyword>
<protein>
    <recommendedName>
        <fullName>Prolevitide</fullName>
    </recommendedName>
    <component>
        <recommendedName>
            <fullName>Amphipathic peptide</fullName>
        </recommendedName>
    </component>
    <component>
        <recommendedName>
            <fullName>Levitide</fullName>
        </recommendedName>
    </component>
</protein>
<accession>P13684</accession>
<dbReference type="EMBL" id="M18681">
    <property type="protein sequence ID" value="AAA49899.1"/>
    <property type="molecule type" value="mRNA"/>
</dbReference>
<dbReference type="PIR" id="A28056">
    <property type="entry name" value="A28056"/>
</dbReference>
<dbReference type="RefSeq" id="NP_001079112.1">
    <property type="nucleotide sequence ID" value="NM_001085643.1"/>
</dbReference>
<dbReference type="RefSeq" id="XP_018097848.1">
    <property type="nucleotide sequence ID" value="XM_018242359.1"/>
</dbReference>
<dbReference type="SMR" id="P13684"/>
<dbReference type="TCDB" id="1.C.16.1.4">
    <property type="family name" value="the magainin (magainin) family"/>
</dbReference>
<dbReference type="GeneID" id="373645"/>
<dbReference type="KEGG" id="xla:373645"/>
<dbReference type="AGR" id="Xenbase:XB-GENE-6252880"/>
<dbReference type="CTD" id="373645"/>
<dbReference type="Xenbase" id="XB-GENE-6252880">
    <property type="gene designation" value="levi.2.L"/>
</dbReference>
<dbReference type="OrthoDB" id="10384889at2759"/>
<dbReference type="Proteomes" id="UP000186698">
    <property type="component" value="Chromosome 6L"/>
</dbReference>
<dbReference type="Bgee" id="373645">
    <property type="expression patterns" value="Expressed in zone of skin and 7 other cell types or tissues"/>
</dbReference>
<dbReference type="GO" id="GO:0005576">
    <property type="term" value="C:extracellular region"/>
    <property type="evidence" value="ECO:0007669"/>
    <property type="project" value="UniProtKB-SubCell"/>
</dbReference>
<dbReference type="GO" id="GO:0005179">
    <property type="term" value="F:hormone activity"/>
    <property type="evidence" value="ECO:0007669"/>
    <property type="project" value="UniProtKB-KW"/>
</dbReference>
<dbReference type="GO" id="GO:0006952">
    <property type="term" value="P:defense response"/>
    <property type="evidence" value="ECO:0007669"/>
    <property type="project" value="UniProtKB-KW"/>
</dbReference>
<dbReference type="GO" id="GO:0007218">
    <property type="term" value="P:neuropeptide signaling pathway"/>
    <property type="evidence" value="ECO:0007669"/>
    <property type="project" value="UniProtKB-KW"/>
</dbReference>
<evidence type="ECO:0000255" key="1"/>
<evidence type="ECO:0000269" key="2">
    <source>
    </source>
</evidence>
<evidence type="ECO:0000305" key="3"/>